<proteinExistence type="inferred from homology"/>
<dbReference type="EC" id="7.1.1.2"/>
<dbReference type="EMBL" id="AF224525">
    <property type="protein sequence ID" value="AAL25162.1"/>
    <property type="molecule type" value="Genomic_DNA"/>
</dbReference>
<dbReference type="EMBL" id="AF224526">
    <property type="protein sequence ID" value="AAN64715.1"/>
    <property type="molecule type" value="Genomic_DNA"/>
</dbReference>
<dbReference type="EMBL" id="AF224527">
    <property type="protein sequence ID" value="AAN64719.1"/>
    <property type="molecule type" value="Genomic_DNA"/>
</dbReference>
<dbReference type="RefSeq" id="YP_009114791.1">
    <property type="nucleotide sequence ID" value="NC_026098.1"/>
</dbReference>
<dbReference type="SMR" id="Q94XZ1"/>
<dbReference type="GeneID" id="22833318"/>
<dbReference type="CTD" id="4539"/>
<dbReference type="GO" id="GO:0005743">
    <property type="term" value="C:mitochondrial inner membrane"/>
    <property type="evidence" value="ECO:0000250"/>
    <property type="project" value="UniProtKB"/>
</dbReference>
<dbReference type="GO" id="GO:0045271">
    <property type="term" value="C:respiratory chain complex I"/>
    <property type="evidence" value="ECO:0000250"/>
    <property type="project" value="UniProtKB"/>
</dbReference>
<dbReference type="GO" id="GO:0008137">
    <property type="term" value="F:NADH dehydrogenase (ubiquinone) activity"/>
    <property type="evidence" value="ECO:0000250"/>
    <property type="project" value="UniProtKB"/>
</dbReference>
<dbReference type="GO" id="GO:0042773">
    <property type="term" value="P:ATP synthesis coupled electron transport"/>
    <property type="evidence" value="ECO:0007669"/>
    <property type="project" value="InterPro"/>
</dbReference>
<dbReference type="FunFam" id="1.10.287.3510:FF:000002">
    <property type="entry name" value="NADH-ubiquinone oxidoreductase chain 4L"/>
    <property type="match status" value="1"/>
</dbReference>
<dbReference type="Gene3D" id="1.10.287.3510">
    <property type="match status" value="1"/>
</dbReference>
<dbReference type="InterPro" id="IPR001133">
    <property type="entry name" value="NADH_UbQ_OxRdtase_chain4L/K"/>
</dbReference>
<dbReference type="InterPro" id="IPR039428">
    <property type="entry name" value="NUOK/Mnh_C1-like"/>
</dbReference>
<dbReference type="PANTHER" id="PTHR11434:SF0">
    <property type="entry name" value="NADH-UBIQUINONE OXIDOREDUCTASE CHAIN 4L"/>
    <property type="match status" value="1"/>
</dbReference>
<dbReference type="PANTHER" id="PTHR11434">
    <property type="entry name" value="NADH-UBIQUINONE OXIDOREDUCTASE SUBUNIT ND4L"/>
    <property type="match status" value="1"/>
</dbReference>
<dbReference type="Pfam" id="PF00420">
    <property type="entry name" value="Oxidored_q2"/>
    <property type="match status" value="1"/>
</dbReference>
<protein>
    <recommendedName>
        <fullName>NADH-ubiquinone oxidoreductase chain 4L</fullName>
        <ecNumber>7.1.1.2</ecNumber>
    </recommendedName>
    <alternativeName>
        <fullName>NADH dehydrogenase subunit 4L</fullName>
    </alternativeName>
</protein>
<evidence type="ECO:0000250" key="1">
    <source>
        <dbReference type="UniProtKB" id="P03901"/>
    </source>
</evidence>
<evidence type="ECO:0000250" key="2">
    <source>
        <dbReference type="UniProtKB" id="P03902"/>
    </source>
</evidence>
<evidence type="ECO:0000255" key="3"/>
<evidence type="ECO:0000305" key="4"/>
<feature type="chain" id="PRO_0000275019" description="NADH-ubiquinone oxidoreductase chain 4L">
    <location>
        <begin position="1"/>
        <end position="98"/>
    </location>
</feature>
<feature type="transmembrane region" description="Helical" evidence="3">
    <location>
        <begin position="2"/>
        <end position="22"/>
    </location>
</feature>
<feature type="transmembrane region" description="Helical" evidence="3">
    <location>
        <begin position="29"/>
        <end position="49"/>
    </location>
</feature>
<feature type="transmembrane region" description="Helical" evidence="3">
    <location>
        <begin position="61"/>
        <end position="81"/>
    </location>
</feature>
<reference key="1">
    <citation type="journal article" date="2003" name="Proc. Natl. Acad. Sci. U.S.A.">
        <title>A molecular approach to comparative phylogeography of extant Malagasy lemurs.</title>
        <authorList>
            <person name="Pastorini J."/>
            <person name="Thalmann U."/>
            <person name="Martin R.D."/>
        </authorList>
    </citation>
    <scope>NUCLEOTIDE SEQUENCE [GENOMIC DNA]</scope>
</reference>
<keyword id="KW-0249">Electron transport</keyword>
<keyword id="KW-0472">Membrane</keyword>
<keyword id="KW-0496">Mitochondrion</keyword>
<keyword id="KW-0999">Mitochondrion inner membrane</keyword>
<keyword id="KW-0520">NAD</keyword>
<keyword id="KW-0679">Respiratory chain</keyword>
<keyword id="KW-1278">Translocase</keyword>
<keyword id="KW-0812">Transmembrane</keyword>
<keyword id="KW-1133">Transmembrane helix</keyword>
<keyword id="KW-0813">Transport</keyword>
<keyword id="KW-0830">Ubiquinone</keyword>
<organism>
    <name type="scientific">Eulemur rubriventer</name>
    <name type="common">Red-bellied lemur</name>
    <dbReference type="NCBI Taxonomy" id="34829"/>
    <lineage>
        <taxon>Eukaryota</taxon>
        <taxon>Metazoa</taxon>
        <taxon>Chordata</taxon>
        <taxon>Craniata</taxon>
        <taxon>Vertebrata</taxon>
        <taxon>Euteleostomi</taxon>
        <taxon>Mammalia</taxon>
        <taxon>Eutheria</taxon>
        <taxon>Euarchontoglires</taxon>
        <taxon>Primates</taxon>
        <taxon>Strepsirrhini</taxon>
        <taxon>Lemuriformes</taxon>
        <taxon>Lemuridae</taxon>
        <taxon>Eulemur</taxon>
    </lineage>
</organism>
<sequence>MPSISTNIVLAFITALLGMLIFRSHLMSSLLCLEGMMLSMFILSTLTILNLHFTTSFMMPILLLVFAACEAAVGLALLVTVSNTYGLDYIQNLNLLQC</sequence>
<comment type="function">
    <text evidence="1">Core subunit of the mitochondrial membrane respiratory chain NADH dehydrogenase (Complex I) which catalyzes electron transfer from NADH through the respiratory chain, using ubiquinone as an electron acceptor. Part of the enzyme membrane arm which is embedded in the lipid bilayer and involved in proton translocation.</text>
</comment>
<comment type="catalytic activity">
    <reaction evidence="1">
        <text>a ubiquinone + NADH + 5 H(+)(in) = a ubiquinol + NAD(+) + 4 H(+)(out)</text>
        <dbReference type="Rhea" id="RHEA:29091"/>
        <dbReference type="Rhea" id="RHEA-COMP:9565"/>
        <dbReference type="Rhea" id="RHEA-COMP:9566"/>
        <dbReference type="ChEBI" id="CHEBI:15378"/>
        <dbReference type="ChEBI" id="CHEBI:16389"/>
        <dbReference type="ChEBI" id="CHEBI:17976"/>
        <dbReference type="ChEBI" id="CHEBI:57540"/>
        <dbReference type="ChEBI" id="CHEBI:57945"/>
        <dbReference type="EC" id="7.1.1.2"/>
    </reaction>
    <physiologicalReaction direction="left-to-right" evidence="1">
        <dbReference type="Rhea" id="RHEA:29092"/>
    </physiologicalReaction>
</comment>
<comment type="subunit">
    <text evidence="2">Core subunit of respiratory chain NADH dehydrogenase (Complex I) which is composed of 45 different subunits.</text>
</comment>
<comment type="subcellular location">
    <subcellularLocation>
        <location evidence="2">Mitochondrion inner membrane</location>
        <topology evidence="3">Multi-pass membrane protein</topology>
    </subcellularLocation>
</comment>
<comment type="similarity">
    <text evidence="4">Belongs to the complex I subunit 4L family.</text>
</comment>
<gene>
    <name type="primary">MT-ND4L</name>
    <name type="synonym">MTND4L</name>
    <name type="synonym">NADH4L</name>
    <name type="synonym">ND4L</name>
</gene>
<name>NU4LM_EULRU</name>
<geneLocation type="mitochondrion"/>
<accession>Q94XZ1</accession>